<protein>
    <recommendedName>
        <fullName evidence="1">L-lactate dehydrogenase</fullName>
        <shortName evidence="1">L-LDH</shortName>
        <ecNumber evidence="1">1.1.1.27</ecNumber>
    </recommendedName>
</protein>
<comment type="function">
    <text evidence="1">Catalyzes the conversion of lactate to pyruvate.</text>
</comment>
<comment type="catalytic activity">
    <reaction evidence="1">
        <text>(S)-lactate + NAD(+) = pyruvate + NADH + H(+)</text>
        <dbReference type="Rhea" id="RHEA:23444"/>
        <dbReference type="ChEBI" id="CHEBI:15361"/>
        <dbReference type="ChEBI" id="CHEBI:15378"/>
        <dbReference type="ChEBI" id="CHEBI:16651"/>
        <dbReference type="ChEBI" id="CHEBI:57540"/>
        <dbReference type="ChEBI" id="CHEBI:57945"/>
        <dbReference type="EC" id="1.1.1.27"/>
    </reaction>
</comment>
<comment type="activity regulation">
    <text evidence="1">Allosterically activated by fructose 1,6-bisphosphate (FBP).</text>
</comment>
<comment type="pathway">
    <text evidence="1">Fermentation; pyruvate fermentation to lactate; (S)-lactate from pyruvate: step 1/1.</text>
</comment>
<comment type="subunit">
    <text evidence="1">Homotetramer.</text>
</comment>
<comment type="subcellular location">
    <subcellularLocation>
        <location evidence="1">Cytoplasm</location>
    </subcellularLocation>
</comment>
<comment type="similarity">
    <text evidence="1">Belongs to the LDH/MDH superfamily. LDH family.</text>
</comment>
<gene>
    <name evidence="1" type="primary">ldh</name>
    <name type="ordered locus">TRQ2_0952</name>
</gene>
<sequence length="319" mass="34963">MKIGIVGLGRVGSSTAFALLMKGFAREMVLIDVDKKRAEGDALDLIHGTPFTRRANIYAGDYADLKGSDVVIVAAGVPQKPGETRLQLLGRNARVMKEIARNVSKYAPDSIVIVVTNPVDVLTYFFLKESGMDPRKVFGSGTVLDTARLRTLIAQHCGFSPRSVHVYVIGEHGDSEVPVWSGAMIGGIPLQNMCQICQKCDSKILENFAEKTKRAAYEIIERKGATHYAIALAVADIVESIFFDEKRVLTLSVYLEDYLGVKDLCISVPVTLGKHGVERILKLNLNEEELEAFRKSASILKNAINEITAEENKHQNTGG</sequence>
<organism>
    <name type="scientific">Thermotoga sp. (strain RQ2)</name>
    <dbReference type="NCBI Taxonomy" id="126740"/>
    <lineage>
        <taxon>Bacteria</taxon>
        <taxon>Thermotogati</taxon>
        <taxon>Thermotogota</taxon>
        <taxon>Thermotogae</taxon>
        <taxon>Thermotogales</taxon>
        <taxon>Thermotogaceae</taxon>
        <taxon>Thermotoga</taxon>
    </lineage>
</organism>
<accession>B1LAF5</accession>
<feature type="chain" id="PRO_1000126164" description="L-lactate dehydrogenase">
    <location>
        <begin position="1"/>
        <end position="319"/>
    </location>
</feature>
<feature type="active site" description="Proton acceptor" evidence="1">
    <location>
        <position position="172"/>
    </location>
</feature>
<feature type="binding site" evidence="1">
    <location>
        <position position="11"/>
    </location>
    <ligand>
        <name>NAD(+)</name>
        <dbReference type="ChEBI" id="CHEBI:57540"/>
    </ligand>
</feature>
<feature type="binding site" evidence="1">
    <location>
        <position position="32"/>
    </location>
    <ligand>
        <name>NAD(+)</name>
        <dbReference type="ChEBI" id="CHEBI:57540"/>
    </ligand>
</feature>
<feature type="binding site" evidence="1">
    <location>
        <position position="37"/>
    </location>
    <ligand>
        <name>NAD(+)</name>
        <dbReference type="ChEBI" id="CHEBI:57540"/>
    </ligand>
</feature>
<feature type="binding site" evidence="1">
    <location>
        <position position="62"/>
    </location>
    <ligand>
        <name>NAD(+)</name>
        <dbReference type="ChEBI" id="CHEBI:57540"/>
    </ligand>
</feature>
<feature type="binding site" evidence="1">
    <location>
        <begin position="76"/>
        <end position="77"/>
    </location>
    <ligand>
        <name>NAD(+)</name>
        <dbReference type="ChEBI" id="CHEBI:57540"/>
    </ligand>
</feature>
<feature type="binding site" evidence="1">
    <location>
        <position position="79"/>
    </location>
    <ligand>
        <name>substrate</name>
    </ligand>
</feature>
<feature type="binding site" evidence="1">
    <location>
        <position position="85"/>
    </location>
    <ligand>
        <name>substrate</name>
    </ligand>
</feature>
<feature type="binding site" evidence="1">
    <location>
        <begin position="115"/>
        <end position="117"/>
    </location>
    <ligand>
        <name>NAD(+)</name>
        <dbReference type="ChEBI" id="CHEBI:57540"/>
    </ligand>
</feature>
<feature type="binding site" evidence="1">
    <location>
        <begin position="117"/>
        <end position="120"/>
    </location>
    <ligand>
        <name>substrate</name>
    </ligand>
</feature>
<feature type="binding site" evidence="1">
    <location>
        <position position="140"/>
    </location>
    <ligand>
        <name>NAD(+)</name>
        <dbReference type="ChEBI" id="CHEBI:57540"/>
    </ligand>
</feature>
<feature type="binding site" evidence="1">
    <location>
        <begin position="145"/>
        <end position="148"/>
    </location>
    <ligand>
        <name>substrate</name>
    </ligand>
</feature>
<feature type="binding site" evidence="1">
    <location>
        <position position="150"/>
    </location>
    <ligand>
        <name>beta-D-fructose 1,6-bisphosphate</name>
        <dbReference type="ChEBI" id="CHEBI:32966"/>
        <note>allosteric activator</note>
    </ligand>
</feature>
<feature type="binding site" evidence="1">
    <location>
        <position position="165"/>
    </location>
    <ligand>
        <name>beta-D-fructose 1,6-bisphosphate</name>
        <dbReference type="ChEBI" id="CHEBI:32966"/>
        <note>allosteric activator</note>
    </ligand>
</feature>
<feature type="binding site" evidence="1">
    <location>
        <position position="226"/>
    </location>
    <ligand>
        <name>substrate</name>
    </ligand>
</feature>
<feature type="modified residue" description="Phosphotyrosine" evidence="1">
    <location>
        <position position="217"/>
    </location>
</feature>
<name>LDH_THESQ</name>
<keyword id="KW-0021">Allosteric enzyme</keyword>
<keyword id="KW-0963">Cytoplasm</keyword>
<keyword id="KW-0520">NAD</keyword>
<keyword id="KW-0560">Oxidoreductase</keyword>
<keyword id="KW-0597">Phosphoprotein</keyword>
<dbReference type="EC" id="1.1.1.27" evidence="1"/>
<dbReference type="EMBL" id="CP000969">
    <property type="protein sequence ID" value="ACB09303.1"/>
    <property type="molecule type" value="Genomic_DNA"/>
</dbReference>
<dbReference type="RefSeq" id="WP_012310838.1">
    <property type="nucleotide sequence ID" value="NC_010483.1"/>
</dbReference>
<dbReference type="SMR" id="B1LAF5"/>
<dbReference type="KEGG" id="trq:TRQ2_0952"/>
<dbReference type="HOGENOM" id="CLU_045401_1_1_0"/>
<dbReference type="UniPathway" id="UPA00554">
    <property type="reaction ID" value="UER00611"/>
</dbReference>
<dbReference type="Proteomes" id="UP000001687">
    <property type="component" value="Chromosome"/>
</dbReference>
<dbReference type="GO" id="GO:0005737">
    <property type="term" value="C:cytoplasm"/>
    <property type="evidence" value="ECO:0007669"/>
    <property type="project" value="UniProtKB-SubCell"/>
</dbReference>
<dbReference type="GO" id="GO:0004459">
    <property type="term" value="F:L-lactate dehydrogenase activity"/>
    <property type="evidence" value="ECO:0007669"/>
    <property type="project" value="UniProtKB-UniRule"/>
</dbReference>
<dbReference type="GO" id="GO:0006096">
    <property type="term" value="P:glycolytic process"/>
    <property type="evidence" value="ECO:0007669"/>
    <property type="project" value="UniProtKB-UniRule"/>
</dbReference>
<dbReference type="GO" id="GO:0006089">
    <property type="term" value="P:lactate metabolic process"/>
    <property type="evidence" value="ECO:0007669"/>
    <property type="project" value="TreeGrafter"/>
</dbReference>
<dbReference type="CDD" id="cd05292">
    <property type="entry name" value="LDH_2"/>
    <property type="match status" value="1"/>
</dbReference>
<dbReference type="FunFam" id="3.40.50.720:FF:000018">
    <property type="entry name" value="Malate dehydrogenase"/>
    <property type="match status" value="1"/>
</dbReference>
<dbReference type="Gene3D" id="3.90.110.10">
    <property type="entry name" value="Lactate dehydrogenase/glycoside hydrolase, family 4, C-terminal"/>
    <property type="match status" value="1"/>
</dbReference>
<dbReference type="Gene3D" id="3.40.50.720">
    <property type="entry name" value="NAD(P)-binding Rossmann-like Domain"/>
    <property type="match status" value="1"/>
</dbReference>
<dbReference type="HAMAP" id="MF_00488">
    <property type="entry name" value="Lactate_dehydrog"/>
    <property type="match status" value="1"/>
</dbReference>
<dbReference type="InterPro" id="IPR001557">
    <property type="entry name" value="L-lactate/malate_DH"/>
</dbReference>
<dbReference type="InterPro" id="IPR011304">
    <property type="entry name" value="L-lactate_DH"/>
</dbReference>
<dbReference type="InterPro" id="IPR018177">
    <property type="entry name" value="L-lactate_DH_AS"/>
</dbReference>
<dbReference type="InterPro" id="IPR022383">
    <property type="entry name" value="Lactate/malate_DH_C"/>
</dbReference>
<dbReference type="InterPro" id="IPR001236">
    <property type="entry name" value="Lactate/malate_DH_N"/>
</dbReference>
<dbReference type="InterPro" id="IPR015955">
    <property type="entry name" value="Lactate_DH/Glyco_Ohase_4_C"/>
</dbReference>
<dbReference type="InterPro" id="IPR036291">
    <property type="entry name" value="NAD(P)-bd_dom_sf"/>
</dbReference>
<dbReference type="NCBIfam" id="TIGR01771">
    <property type="entry name" value="L-LDH-NAD"/>
    <property type="match status" value="1"/>
</dbReference>
<dbReference type="NCBIfam" id="NF000824">
    <property type="entry name" value="PRK00066.1"/>
    <property type="match status" value="1"/>
</dbReference>
<dbReference type="NCBIfam" id="NF004863">
    <property type="entry name" value="PRK06223.1"/>
    <property type="match status" value="1"/>
</dbReference>
<dbReference type="PANTHER" id="PTHR43128">
    <property type="entry name" value="L-2-HYDROXYCARBOXYLATE DEHYDROGENASE (NAD(P)(+))"/>
    <property type="match status" value="1"/>
</dbReference>
<dbReference type="PANTHER" id="PTHR43128:SF16">
    <property type="entry name" value="L-LACTATE DEHYDROGENASE"/>
    <property type="match status" value="1"/>
</dbReference>
<dbReference type="Pfam" id="PF02866">
    <property type="entry name" value="Ldh_1_C"/>
    <property type="match status" value="1"/>
</dbReference>
<dbReference type="Pfam" id="PF00056">
    <property type="entry name" value="Ldh_1_N"/>
    <property type="match status" value="1"/>
</dbReference>
<dbReference type="PIRSF" id="PIRSF000102">
    <property type="entry name" value="Lac_mal_DH"/>
    <property type="match status" value="1"/>
</dbReference>
<dbReference type="PRINTS" id="PR00086">
    <property type="entry name" value="LLDHDRGNASE"/>
</dbReference>
<dbReference type="SUPFAM" id="SSF56327">
    <property type="entry name" value="LDH C-terminal domain-like"/>
    <property type="match status" value="1"/>
</dbReference>
<dbReference type="SUPFAM" id="SSF51735">
    <property type="entry name" value="NAD(P)-binding Rossmann-fold domains"/>
    <property type="match status" value="1"/>
</dbReference>
<dbReference type="PROSITE" id="PS00064">
    <property type="entry name" value="L_LDH"/>
    <property type="match status" value="1"/>
</dbReference>
<evidence type="ECO:0000255" key="1">
    <source>
        <dbReference type="HAMAP-Rule" id="MF_00488"/>
    </source>
</evidence>
<reference key="1">
    <citation type="journal article" date="2011" name="J. Bacteriol.">
        <title>Genome sequence of Thermotoga sp. strain RQ2, a hyperthermophilic bacterium isolated from a geothermally heated region of the seafloor near Ribeira Quente, the Azores.</title>
        <authorList>
            <person name="Swithers K.S."/>
            <person name="DiPippo J.L."/>
            <person name="Bruce D.C."/>
            <person name="Detter C."/>
            <person name="Tapia R."/>
            <person name="Han S."/>
            <person name="Saunders E."/>
            <person name="Goodwin L.A."/>
            <person name="Han J."/>
            <person name="Woyke T."/>
            <person name="Pitluck S."/>
            <person name="Pennacchio L."/>
            <person name="Nolan M."/>
            <person name="Mikhailova N."/>
            <person name="Lykidis A."/>
            <person name="Land M.L."/>
            <person name="Brettin T."/>
            <person name="Stetter K.O."/>
            <person name="Nelson K.E."/>
            <person name="Gogarten J.P."/>
            <person name="Noll K.M."/>
        </authorList>
    </citation>
    <scope>NUCLEOTIDE SEQUENCE [LARGE SCALE GENOMIC DNA]</scope>
    <source>
        <strain>RQ2</strain>
    </source>
</reference>
<proteinExistence type="inferred from homology"/>